<reference key="1">
    <citation type="journal article" date="2005" name="BMC Genomics">
        <title>Bacterial genome adaptation to niches: divergence of the potential virulence genes in three Burkholderia species of different survival strategies.</title>
        <authorList>
            <person name="Kim H.S."/>
            <person name="Schell M.A."/>
            <person name="Yu Y."/>
            <person name="Ulrich R.L."/>
            <person name="Sarria S.H."/>
            <person name="Nierman W.C."/>
            <person name="DeShazer D."/>
        </authorList>
    </citation>
    <scope>NUCLEOTIDE SEQUENCE [LARGE SCALE GENOMIC DNA]</scope>
    <source>
        <strain>ATCC 700388 / DSM 13276 / CCUG 48851 / CIP 106301 / E264</strain>
    </source>
</reference>
<gene>
    <name evidence="1" type="primary">dadA</name>
    <name type="ordered locus">BTH_I1656</name>
</gene>
<organism>
    <name type="scientific">Burkholderia thailandensis (strain ATCC 700388 / DSM 13276 / CCUG 48851 / CIP 106301 / E264)</name>
    <dbReference type="NCBI Taxonomy" id="271848"/>
    <lineage>
        <taxon>Bacteria</taxon>
        <taxon>Pseudomonadati</taxon>
        <taxon>Pseudomonadota</taxon>
        <taxon>Betaproteobacteria</taxon>
        <taxon>Burkholderiales</taxon>
        <taxon>Burkholderiaceae</taxon>
        <taxon>Burkholderia</taxon>
        <taxon>pseudomallei group</taxon>
    </lineage>
</organism>
<comment type="function">
    <text evidence="1">Oxidative deamination of D-amino acids.</text>
</comment>
<comment type="catalytic activity">
    <reaction evidence="1">
        <text>a D-alpha-amino acid + A + H2O = a 2-oxocarboxylate + AH2 + NH4(+)</text>
        <dbReference type="Rhea" id="RHEA:18125"/>
        <dbReference type="ChEBI" id="CHEBI:13193"/>
        <dbReference type="ChEBI" id="CHEBI:15377"/>
        <dbReference type="ChEBI" id="CHEBI:17499"/>
        <dbReference type="ChEBI" id="CHEBI:28938"/>
        <dbReference type="ChEBI" id="CHEBI:35179"/>
        <dbReference type="ChEBI" id="CHEBI:59871"/>
    </reaction>
</comment>
<comment type="cofactor">
    <cofactor evidence="1">
        <name>FAD</name>
        <dbReference type="ChEBI" id="CHEBI:57692"/>
    </cofactor>
</comment>
<comment type="pathway">
    <text>Amino-acid degradation; D-alanine degradation; NH(3) and pyruvate from D-alanine: step 1/1.</text>
</comment>
<comment type="similarity">
    <text evidence="1">Belongs to the DadA oxidoreductase family.</text>
</comment>
<protein>
    <recommendedName>
        <fullName evidence="1">D-amino acid dehydrogenase</fullName>
        <ecNumber evidence="1">1.4.99.-</ecNumber>
    </recommendedName>
</protein>
<name>DADA_BURTA</name>
<feature type="chain" id="PRO_1000066084" description="D-amino acid dehydrogenase">
    <location>
        <begin position="1"/>
        <end position="428"/>
    </location>
</feature>
<feature type="binding site" evidence="1">
    <location>
        <begin position="3"/>
        <end position="17"/>
    </location>
    <ligand>
        <name>FAD</name>
        <dbReference type="ChEBI" id="CHEBI:57692"/>
    </ligand>
</feature>
<dbReference type="EC" id="1.4.99.-" evidence="1"/>
<dbReference type="EMBL" id="CP000086">
    <property type="protein sequence ID" value="ABC37282.1"/>
    <property type="molecule type" value="Genomic_DNA"/>
</dbReference>
<dbReference type="RefSeq" id="WP_009904409.1">
    <property type="nucleotide sequence ID" value="NZ_CP008785.1"/>
</dbReference>
<dbReference type="SMR" id="Q2SY06"/>
<dbReference type="GeneID" id="45121387"/>
<dbReference type="KEGG" id="bte:BTH_I1656"/>
<dbReference type="HOGENOM" id="CLU_007884_9_2_4"/>
<dbReference type="UniPathway" id="UPA00043">
    <property type="reaction ID" value="UER00498"/>
</dbReference>
<dbReference type="Proteomes" id="UP000001930">
    <property type="component" value="Chromosome I"/>
</dbReference>
<dbReference type="GO" id="GO:0005737">
    <property type="term" value="C:cytoplasm"/>
    <property type="evidence" value="ECO:0007669"/>
    <property type="project" value="TreeGrafter"/>
</dbReference>
<dbReference type="GO" id="GO:0005886">
    <property type="term" value="C:plasma membrane"/>
    <property type="evidence" value="ECO:0007669"/>
    <property type="project" value="TreeGrafter"/>
</dbReference>
<dbReference type="GO" id="GO:0008718">
    <property type="term" value="F:D-amino-acid dehydrogenase activity"/>
    <property type="evidence" value="ECO:0007669"/>
    <property type="project" value="UniProtKB-UniRule"/>
</dbReference>
<dbReference type="GO" id="GO:0055130">
    <property type="term" value="P:D-alanine catabolic process"/>
    <property type="evidence" value="ECO:0007669"/>
    <property type="project" value="UniProtKB-UniPathway"/>
</dbReference>
<dbReference type="FunFam" id="3.50.50.60:FF:000020">
    <property type="entry name" value="D-amino acid dehydrogenase"/>
    <property type="match status" value="1"/>
</dbReference>
<dbReference type="Gene3D" id="3.30.9.10">
    <property type="entry name" value="D-Amino Acid Oxidase, subunit A, domain 2"/>
    <property type="match status" value="1"/>
</dbReference>
<dbReference type="Gene3D" id="3.50.50.60">
    <property type="entry name" value="FAD/NAD(P)-binding domain"/>
    <property type="match status" value="2"/>
</dbReference>
<dbReference type="HAMAP" id="MF_01202">
    <property type="entry name" value="DadA"/>
    <property type="match status" value="1"/>
</dbReference>
<dbReference type="InterPro" id="IPR023080">
    <property type="entry name" value="DadA"/>
</dbReference>
<dbReference type="InterPro" id="IPR006076">
    <property type="entry name" value="FAD-dep_OxRdtase"/>
</dbReference>
<dbReference type="InterPro" id="IPR036188">
    <property type="entry name" value="FAD/NAD-bd_sf"/>
</dbReference>
<dbReference type="NCBIfam" id="NF001933">
    <property type="entry name" value="PRK00711.1"/>
    <property type="match status" value="1"/>
</dbReference>
<dbReference type="PANTHER" id="PTHR13847:SF280">
    <property type="entry name" value="D-AMINO ACID DEHYDROGENASE"/>
    <property type="match status" value="1"/>
</dbReference>
<dbReference type="PANTHER" id="PTHR13847">
    <property type="entry name" value="SARCOSINE DEHYDROGENASE-RELATED"/>
    <property type="match status" value="1"/>
</dbReference>
<dbReference type="Pfam" id="PF01266">
    <property type="entry name" value="DAO"/>
    <property type="match status" value="1"/>
</dbReference>
<dbReference type="SUPFAM" id="SSF54373">
    <property type="entry name" value="FAD-linked reductases, C-terminal domain"/>
    <property type="match status" value="1"/>
</dbReference>
<dbReference type="SUPFAM" id="SSF51905">
    <property type="entry name" value="FAD/NAD(P)-binding domain"/>
    <property type="match status" value="1"/>
</dbReference>
<keyword id="KW-0274">FAD</keyword>
<keyword id="KW-0285">Flavoprotein</keyword>
<keyword id="KW-0560">Oxidoreductase</keyword>
<sequence>MRVVILGSGVVGVASAYYLARAGHEVTVIDREAGPALDTSFANAGQISPGYAAPWAAPGVPLKAVKWMFEKHAPLAIRLDGTRFQLQWMWQMLRNCTTERYALNKGRMVRLAEYSRDCLQALRAETDIQYEGRTGGTLQVFRTQQQLDGAAKDIAVLREANVPFELLSSDELKKAEPALAAVSHKLTGGLRLPGDETGDCQLFTTRLAALAEQLGVKFRFNTRIDALAVAGGKIAGVQCGGEMVRADAYVVALGAFSTNLVANLVKIPVYPLKGYSITAPIVDAAKAPVSTVLDETYKIAITRFDERIRVGGMAEIVGFDKRLRQARRDTLEMCVNDLFPGGGDTANASFWTGLRPMTPDGTPIVGRTPVPNLFLNTGHGTLGWTMSCGSGQLLADLMSGKKPAIRADDLSVHRYLSETDGEHRPAYA</sequence>
<accession>Q2SY06</accession>
<proteinExistence type="inferred from homology"/>
<evidence type="ECO:0000255" key="1">
    <source>
        <dbReference type="HAMAP-Rule" id="MF_01202"/>
    </source>
</evidence>